<feature type="chain" id="PRO_1000046037" description="Ribosomal protein L11 methyltransferase">
    <location>
        <begin position="1"/>
        <end position="315"/>
    </location>
</feature>
<feature type="binding site" evidence="1">
    <location>
        <position position="163"/>
    </location>
    <ligand>
        <name>S-adenosyl-L-methionine</name>
        <dbReference type="ChEBI" id="CHEBI:59789"/>
    </ligand>
</feature>
<feature type="binding site" evidence="1">
    <location>
        <position position="184"/>
    </location>
    <ligand>
        <name>S-adenosyl-L-methionine</name>
        <dbReference type="ChEBI" id="CHEBI:59789"/>
    </ligand>
</feature>
<feature type="binding site" evidence="1">
    <location>
        <position position="206"/>
    </location>
    <ligand>
        <name>S-adenosyl-L-methionine</name>
        <dbReference type="ChEBI" id="CHEBI:59789"/>
    </ligand>
</feature>
<feature type="binding site" evidence="1">
    <location>
        <position position="248"/>
    </location>
    <ligand>
        <name>S-adenosyl-L-methionine</name>
        <dbReference type="ChEBI" id="CHEBI:59789"/>
    </ligand>
</feature>
<protein>
    <recommendedName>
        <fullName evidence="1">Ribosomal protein L11 methyltransferase</fullName>
        <shortName evidence="1">L11 Mtase</shortName>
        <ecNumber evidence="1">2.1.1.-</ecNumber>
    </recommendedName>
</protein>
<dbReference type="EC" id="2.1.1.-" evidence="1"/>
<dbReference type="EMBL" id="CP000423">
    <property type="protein sequence ID" value="ABJ70317.1"/>
    <property type="molecule type" value="Genomic_DNA"/>
</dbReference>
<dbReference type="RefSeq" id="WP_003594607.1">
    <property type="nucleotide sequence ID" value="NC_008526.1"/>
</dbReference>
<dbReference type="RefSeq" id="YP_806759.1">
    <property type="nucleotide sequence ID" value="NC_008526.1"/>
</dbReference>
<dbReference type="SMR" id="Q038Q5"/>
<dbReference type="STRING" id="321967.LSEI_1542"/>
<dbReference type="PaxDb" id="321967-LSEI_1542"/>
<dbReference type="KEGG" id="lca:LSEI_1542"/>
<dbReference type="PATRIC" id="fig|321967.11.peg.1524"/>
<dbReference type="HOGENOM" id="CLU_049382_0_1_9"/>
<dbReference type="Proteomes" id="UP000001651">
    <property type="component" value="Chromosome"/>
</dbReference>
<dbReference type="GO" id="GO:0005737">
    <property type="term" value="C:cytoplasm"/>
    <property type="evidence" value="ECO:0007669"/>
    <property type="project" value="UniProtKB-SubCell"/>
</dbReference>
<dbReference type="GO" id="GO:0016279">
    <property type="term" value="F:protein-lysine N-methyltransferase activity"/>
    <property type="evidence" value="ECO:0007669"/>
    <property type="project" value="RHEA"/>
</dbReference>
<dbReference type="GO" id="GO:0032259">
    <property type="term" value="P:methylation"/>
    <property type="evidence" value="ECO:0007669"/>
    <property type="project" value="UniProtKB-KW"/>
</dbReference>
<dbReference type="CDD" id="cd02440">
    <property type="entry name" value="AdoMet_MTases"/>
    <property type="match status" value="1"/>
</dbReference>
<dbReference type="Gene3D" id="3.40.50.150">
    <property type="entry name" value="Vaccinia Virus protein VP39"/>
    <property type="match status" value="1"/>
</dbReference>
<dbReference type="HAMAP" id="MF_00735">
    <property type="entry name" value="Methyltr_PrmA"/>
    <property type="match status" value="1"/>
</dbReference>
<dbReference type="InterPro" id="IPR050078">
    <property type="entry name" value="Ribosomal_L11_MeTrfase_PrmA"/>
</dbReference>
<dbReference type="InterPro" id="IPR004498">
    <property type="entry name" value="Ribosomal_PrmA_MeTrfase"/>
</dbReference>
<dbReference type="InterPro" id="IPR029063">
    <property type="entry name" value="SAM-dependent_MTases_sf"/>
</dbReference>
<dbReference type="NCBIfam" id="TIGR00406">
    <property type="entry name" value="prmA"/>
    <property type="match status" value="1"/>
</dbReference>
<dbReference type="PANTHER" id="PTHR43648">
    <property type="entry name" value="ELECTRON TRANSFER FLAVOPROTEIN BETA SUBUNIT LYSINE METHYLTRANSFERASE"/>
    <property type="match status" value="1"/>
</dbReference>
<dbReference type="PANTHER" id="PTHR43648:SF1">
    <property type="entry name" value="ELECTRON TRANSFER FLAVOPROTEIN BETA SUBUNIT LYSINE METHYLTRANSFERASE"/>
    <property type="match status" value="1"/>
</dbReference>
<dbReference type="Pfam" id="PF06325">
    <property type="entry name" value="PrmA"/>
    <property type="match status" value="1"/>
</dbReference>
<dbReference type="PIRSF" id="PIRSF000401">
    <property type="entry name" value="RPL11_MTase"/>
    <property type="match status" value="1"/>
</dbReference>
<dbReference type="SUPFAM" id="SSF53335">
    <property type="entry name" value="S-adenosyl-L-methionine-dependent methyltransferases"/>
    <property type="match status" value="1"/>
</dbReference>
<evidence type="ECO:0000255" key="1">
    <source>
        <dbReference type="HAMAP-Rule" id="MF_00735"/>
    </source>
</evidence>
<organism>
    <name type="scientific">Lacticaseibacillus paracasei (strain ATCC 334 / BCRC 17002 / CCUG 31169 / CIP 107868 / KCTC 3260 / NRRL B-441)</name>
    <name type="common">Lactobacillus paracasei</name>
    <dbReference type="NCBI Taxonomy" id="321967"/>
    <lineage>
        <taxon>Bacteria</taxon>
        <taxon>Bacillati</taxon>
        <taxon>Bacillota</taxon>
        <taxon>Bacilli</taxon>
        <taxon>Lactobacillales</taxon>
        <taxon>Lactobacillaceae</taxon>
        <taxon>Lacticaseibacillus</taxon>
    </lineage>
</organism>
<reference key="1">
    <citation type="journal article" date="2006" name="Proc. Natl. Acad. Sci. U.S.A.">
        <title>Comparative genomics of the lactic acid bacteria.</title>
        <authorList>
            <person name="Makarova K.S."/>
            <person name="Slesarev A."/>
            <person name="Wolf Y.I."/>
            <person name="Sorokin A."/>
            <person name="Mirkin B."/>
            <person name="Koonin E.V."/>
            <person name="Pavlov A."/>
            <person name="Pavlova N."/>
            <person name="Karamychev V."/>
            <person name="Polouchine N."/>
            <person name="Shakhova V."/>
            <person name="Grigoriev I."/>
            <person name="Lou Y."/>
            <person name="Rohksar D."/>
            <person name="Lucas S."/>
            <person name="Huang K."/>
            <person name="Goodstein D.M."/>
            <person name="Hawkins T."/>
            <person name="Plengvidhya V."/>
            <person name="Welker D."/>
            <person name="Hughes J."/>
            <person name="Goh Y."/>
            <person name="Benson A."/>
            <person name="Baldwin K."/>
            <person name="Lee J.-H."/>
            <person name="Diaz-Muniz I."/>
            <person name="Dosti B."/>
            <person name="Smeianov V."/>
            <person name="Wechter W."/>
            <person name="Barabote R."/>
            <person name="Lorca G."/>
            <person name="Altermann E."/>
            <person name="Barrangou R."/>
            <person name="Ganesan B."/>
            <person name="Xie Y."/>
            <person name="Rawsthorne H."/>
            <person name="Tamir D."/>
            <person name="Parker C."/>
            <person name="Breidt F."/>
            <person name="Broadbent J.R."/>
            <person name="Hutkins R."/>
            <person name="O'Sullivan D."/>
            <person name="Steele J."/>
            <person name="Unlu G."/>
            <person name="Saier M.H. Jr."/>
            <person name="Klaenhammer T."/>
            <person name="Richardson P."/>
            <person name="Kozyavkin S."/>
            <person name="Weimer B.C."/>
            <person name="Mills D.A."/>
        </authorList>
    </citation>
    <scope>NUCLEOTIDE SEQUENCE [LARGE SCALE GENOMIC DNA]</scope>
    <source>
        <strain>ATCC 334 / BCRC 17002 / CCUG 31169 / CIP 107868 / KCTC 3260 / NRRL B-441</strain>
    </source>
</reference>
<gene>
    <name evidence="1" type="primary">prmA</name>
    <name type="ordered locus">LSEI_1542</name>
</gene>
<comment type="function">
    <text evidence="1">Methylates ribosomal protein L11.</text>
</comment>
<comment type="catalytic activity">
    <reaction evidence="1">
        <text>L-lysyl-[protein] + 3 S-adenosyl-L-methionine = N(6),N(6),N(6)-trimethyl-L-lysyl-[protein] + 3 S-adenosyl-L-homocysteine + 3 H(+)</text>
        <dbReference type="Rhea" id="RHEA:54192"/>
        <dbReference type="Rhea" id="RHEA-COMP:9752"/>
        <dbReference type="Rhea" id="RHEA-COMP:13826"/>
        <dbReference type="ChEBI" id="CHEBI:15378"/>
        <dbReference type="ChEBI" id="CHEBI:29969"/>
        <dbReference type="ChEBI" id="CHEBI:57856"/>
        <dbReference type="ChEBI" id="CHEBI:59789"/>
        <dbReference type="ChEBI" id="CHEBI:61961"/>
    </reaction>
</comment>
<comment type="subcellular location">
    <subcellularLocation>
        <location evidence="1">Cytoplasm</location>
    </subcellularLocation>
</comment>
<comment type="similarity">
    <text evidence="1">Belongs to the methyltransferase superfamily. PrmA family.</text>
</comment>
<accession>Q038Q5</accession>
<keyword id="KW-0963">Cytoplasm</keyword>
<keyword id="KW-0489">Methyltransferase</keyword>
<keyword id="KW-1185">Reference proteome</keyword>
<keyword id="KW-0949">S-adenosyl-L-methionine</keyword>
<keyword id="KW-0808">Transferase</keyword>
<sequence>MNDWTALTVTTTTEAIEAVSNILMEAGAVGIQIKDAADFKKETVDAHGTWFDPKTVPHLASGAQVIGYFDPATSLVEQRDHIATRVRGLAQFGLDPGAATVTLADVRQADWANVWKQYYHPLRVSRFLTIVPKWEHYTPQQAGELQLTLDPGMAFGTGTHPTTQLMLSLLESVIRGGETMIDVGTGSGILAIAAERLGVGDILATDVDEIAVRNAEANIKLNPVSHITVIANDLLKGITLSADLIVANILAEVLVPLIPQVRPRLKAHGHFLLAGIIANKATLIIRTLEDNGFSIAQRREAGGWVALDAVIKETA</sequence>
<name>PRMA_LACP3</name>
<proteinExistence type="inferred from homology"/>